<name>LOT5_KLULA</name>
<proteinExistence type="inferred from homology"/>
<reference key="1">
    <citation type="journal article" date="2004" name="Nature">
        <title>Genome evolution in yeasts.</title>
        <authorList>
            <person name="Dujon B."/>
            <person name="Sherman D."/>
            <person name="Fischer G."/>
            <person name="Durrens P."/>
            <person name="Casaregola S."/>
            <person name="Lafontaine I."/>
            <person name="de Montigny J."/>
            <person name="Marck C."/>
            <person name="Neuveglise C."/>
            <person name="Talla E."/>
            <person name="Goffard N."/>
            <person name="Frangeul L."/>
            <person name="Aigle M."/>
            <person name="Anthouard V."/>
            <person name="Babour A."/>
            <person name="Barbe V."/>
            <person name="Barnay S."/>
            <person name="Blanchin S."/>
            <person name="Beckerich J.-M."/>
            <person name="Beyne E."/>
            <person name="Bleykasten C."/>
            <person name="Boisrame A."/>
            <person name="Boyer J."/>
            <person name="Cattolico L."/>
            <person name="Confanioleri F."/>
            <person name="de Daruvar A."/>
            <person name="Despons L."/>
            <person name="Fabre E."/>
            <person name="Fairhead C."/>
            <person name="Ferry-Dumazet H."/>
            <person name="Groppi A."/>
            <person name="Hantraye F."/>
            <person name="Hennequin C."/>
            <person name="Jauniaux N."/>
            <person name="Joyet P."/>
            <person name="Kachouri R."/>
            <person name="Kerrest A."/>
            <person name="Koszul R."/>
            <person name="Lemaire M."/>
            <person name="Lesur I."/>
            <person name="Ma L."/>
            <person name="Muller H."/>
            <person name="Nicaud J.-M."/>
            <person name="Nikolski M."/>
            <person name="Oztas S."/>
            <person name="Ozier-Kalogeropoulos O."/>
            <person name="Pellenz S."/>
            <person name="Potier S."/>
            <person name="Richard G.-F."/>
            <person name="Straub M.-L."/>
            <person name="Suleau A."/>
            <person name="Swennen D."/>
            <person name="Tekaia F."/>
            <person name="Wesolowski-Louvel M."/>
            <person name="Westhof E."/>
            <person name="Wirth B."/>
            <person name="Zeniou-Meyer M."/>
            <person name="Zivanovic Y."/>
            <person name="Bolotin-Fukuhara M."/>
            <person name="Thierry A."/>
            <person name="Bouchier C."/>
            <person name="Caudron B."/>
            <person name="Scarpelli C."/>
            <person name="Gaillardin C."/>
            <person name="Weissenbach J."/>
            <person name="Wincker P."/>
            <person name="Souciet J.-L."/>
        </authorList>
    </citation>
    <scope>NUCLEOTIDE SEQUENCE [LARGE SCALE GENOMIC DNA]</scope>
    <source>
        <strain>ATCC 8585 / CBS 2359 / DSM 70799 / NBRC 1267 / NRRL Y-1140 / WM37</strain>
    </source>
</reference>
<evidence type="ECO:0000250" key="1"/>
<evidence type="ECO:0000305" key="2"/>
<keyword id="KW-0963">Cytoplasm</keyword>
<keyword id="KW-0539">Nucleus</keyword>
<keyword id="KW-1185">Reference proteome</keyword>
<comment type="subcellular location">
    <subcellularLocation>
        <location evidence="1">Cytoplasm</location>
    </subcellularLocation>
    <subcellularLocation>
        <location evidence="1">Nucleus</location>
    </subcellularLocation>
</comment>
<comment type="similarity">
    <text evidence="2">Belongs to the LOT5 family.</text>
</comment>
<gene>
    <name type="primary">LOT5</name>
    <name type="ordered locus">KLLA0B02695g</name>
</gene>
<accession>Q6CWN7</accession>
<protein>
    <recommendedName>
        <fullName>Protein LOT5</fullName>
    </recommendedName>
</protein>
<sequence>MVVHPNEKQFCQLILTKPTVENVATIGQYQLTQPRLKGINLLEQSDLPILYGGGRDFMFGELNSELEQAEHATTNSPPQMILSDLFVLNTCVLIWFQDWERSLQIPYRNIMYHAIRKIDDRHLTEGHRLELMIAIERDPIINELFPLPNVSKANNFTGTGSYLQETTLSSVELILRPKYANFDRHYNVEVEDLFTFKEFGLNRGDTMVKNCHNAILTCMDFYPEEEPTNQQCTQPHSTTTEISAMPDIGHLQNVYVNSGTADDLDGDSTMDIYAQDGFDASMALQFYADQPLAGQKHRV</sequence>
<dbReference type="EMBL" id="CR382122">
    <property type="protein sequence ID" value="CAH02045.1"/>
    <property type="molecule type" value="Genomic_DNA"/>
</dbReference>
<dbReference type="RefSeq" id="XP_451652.1">
    <property type="nucleotide sequence ID" value="XM_451652.1"/>
</dbReference>
<dbReference type="FunCoup" id="Q6CWN7">
    <property type="interactions" value="49"/>
</dbReference>
<dbReference type="STRING" id="284590.Q6CWN7"/>
<dbReference type="PaxDb" id="284590-Q6CWN7"/>
<dbReference type="KEGG" id="kla:KLLA0_B02695g"/>
<dbReference type="eggNOG" id="ENOG502RY1I">
    <property type="taxonomic scope" value="Eukaryota"/>
</dbReference>
<dbReference type="HOGENOM" id="CLU_073622_0_0_1"/>
<dbReference type="InParanoid" id="Q6CWN7"/>
<dbReference type="OMA" id="NSCIIIW"/>
<dbReference type="Proteomes" id="UP000000598">
    <property type="component" value="Chromosome B"/>
</dbReference>
<dbReference type="GO" id="GO:0005737">
    <property type="term" value="C:cytoplasm"/>
    <property type="evidence" value="ECO:0007669"/>
    <property type="project" value="UniProtKB-SubCell"/>
</dbReference>
<dbReference type="GO" id="GO:0005634">
    <property type="term" value="C:nucleus"/>
    <property type="evidence" value="ECO:0007669"/>
    <property type="project" value="UniProtKB-SubCell"/>
</dbReference>
<dbReference type="InterPro" id="IPR039924">
    <property type="entry name" value="ICln/Lot5/Saf5"/>
</dbReference>
<dbReference type="Pfam" id="PF03517">
    <property type="entry name" value="Voldacs"/>
    <property type="match status" value="1"/>
</dbReference>
<feature type="chain" id="PRO_0000324398" description="Protein LOT5">
    <location>
        <begin position="1"/>
        <end position="299"/>
    </location>
</feature>
<organism>
    <name type="scientific">Kluyveromyces lactis (strain ATCC 8585 / CBS 2359 / DSM 70799 / NBRC 1267 / NRRL Y-1140 / WM37)</name>
    <name type="common">Yeast</name>
    <name type="synonym">Candida sphaerica</name>
    <dbReference type="NCBI Taxonomy" id="284590"/>
    <lineage>
        <taxon>Eukaryota</taxon>
        <taxon>Fungi</taxon>
        <taxon>Dikarya</taxon>
        <taxon>Ascomycota</taxon>
        <taxon>Saccharomycotina</taxon>
        <taxon>Saccharomycetes</taxon>
        <taxon>Saccharomycetales</taxon>
        <taxon>Saccharomycetaceae</taxon>
        <taxon>Kluyveromyces</taxon>
    </lineage>
</organism>